<dbReference type="SMR" id="P0DQB3"/>
<dbReference type="GO" id="GO:0005576">
    <property type="term" value="C:extracellular region"/>
    <property type="evidence" value="ECO:0007669"/>
    <property type="project" value="UniProtKB-SubCell"/>
</dbReference>
<dbReference type="GO" id="GO:0090729">
    <property type="term" value="F:toxin activity"/>
    <property type="evidence" value="ECO:0007669"/>
    <property type="project" value="UniProtKB-KW"/>
</dbReference>
<organism>
    <name type="scientific">Scolopendra morsitans</name>
    <name type="common">Tanzanian blue ringleg centipede</name>
    <dbReference type="NCBI Taxonomy" id="943129"/>
    <lineage>
        <taxon>Eukaryota</taxon>
        <taxon>Metazoa</taxon>
        <taxon>Ecdysozoa</taxon>
        <taxon>Arthropoda</taxon>
        <taxon>Myriapoda</taxon>
        <taxon>Chilopoda</taxon>
        <taxon>Pleurostigmophora</taxon>
        <taxon>Scolopendromorpha</taxon>
        <taxon>Scolopendridae</taxon>
        <taxon>Scolopendra</taxon>
    </lineage>
</organism>
<evidence type="ECO:0000255" key="1"/>
<evidence type="ECO:0000303" key="2">
    <source>
    </source>
</evidence>
<evidence type="ECO:0000305" key="3"/>
<evidence type="ECO:0000305" key="4">
    <source>
    </source>
</evidence>
<accession>P0DQB3</accession>
<proteinExistence type="inferred from homology"/>
<reference key="1">
    <citation type="journal article" date="2014" name="Mol. Biol. Evol.">
        <title>Clawing through evolution: toxin diversification and convergence in the ancient lineage Chilopoda (centipedes).</title>
        <authorList>
            <person name="Undheim E.A."/>
            <person name="Jones A."/>
            <person name="Clauser K.R."/>
            <person name="Holland J.W."/>
            <person name="Pineda S.S."/>
            <person name="King G.F."/>
            <person name="Fry B.G."/>
        </authorList>
    </citation>
    <scope>NUCLEOTIDE SEQUENCE [MRNA]</scope>
    <scope>NOMENCLATURE</scope>
    <source>
        <tissue>Venom gland</tissue>
    </source>
</reference>
<sequence length="61" mass="6838">MNPKLCMLLLVCLMAFYVIETVQAKLTGECPAELEKECLNRRCASPCCKNNKCHCGCGRKK</sequence>
<keyword id="KW-1015">Disulfide bond</keyword>
<keyword id="KW-0964">Secreted</keyword>
<keyword id="KW-0732">Signal</keyword>
<keyword id="KW-0800">Toxin</keyword>
<comment type="subcellular location">
    <subcellularLocation>
        <location evidence="4">Secreted</location>
    </subcellularLocation>
</comment>
<comment type="tissue specificity">
    <text evidence="4">Expressed by the venom gland.</text>
</comment>
<comment type="PTM">
    <text evidence="3">Contains 4 disulfide bonds.</text>
</comment>
<comment type="similarity">
    <text evidence="3">Belongs to the scoloptoxin-14 family.</text>
</comment>
<comment type="caution">
    <text evidence="4">All S.morsitans family members described in 'Undeheim et al., 2014' have not been imported into UniProtKB. Please, refer to this paper to access them.</text>
</comment>
<comment type="online information" name="National Center for Biotechnology Information (NCBI)">
    <link uri="https://www.ncbi.nlm.nih.gov/nuccore/GASH01000145"/>
</comment>
<name>TXE1A_SCOMO</name>
<feature type="signal peptide" evidence="1">
    <location>
        <begin position="1"/>
        <end position="24"/>
    </location>
</feature>
<feature type="chain" id="PRO_0000446787" description="U-scoloptoxin(14)-Sm1a" evidence="3">
    <location>
        <begin position="25"/>
        <end position="61"/>
    </location>
</feature>
<protein>
    <recommendedName>
        <fullName evidence="2">U-scoloptoxin(14)-Sm1a</fullName>
        <shortName evidence="2">U-SLPTX(14)-Sm1a</shortName>
    </recommendedName>
</protein>